<reference key="1">
    <citation type="submission" date="2008-06" db="EMBL/GenBank/DDBJ databases">
        <title>Complete sequence of chromosome of Prosthecochloris aestuarii DSM 271.</title>
        <authorList>
            <consortium name="US DOE Joint Genome Institute"/>
            <person name="Lucas S."/>
            <person name="Copeland A."/>
            <person name="Lapidus A."/>
            <person name="Glavina del Rio T."/>
            <person name="Dalin E."/>
            <person name="Tice H."/>
            <person name="Bruce D."/>
            <person name="Goodwin L."/>
            <person name="Pitluck S."/>
            <person name="Schmutz J."/>
            <person name="Larimer F."/>
            <person name="Land M."/>
            <person name="Hauser L."/>
            <person name="Kyrpides N."/>
            <person name="Anderson I."/>
            <person name="Liu Z."/>
            <person name="Li T."/>
            <person name="Zhao F."/>
            <person name="Overmann J."/>
            <person name="Bryant D.A."/>
            <person name="Richardson P."/>
        </authorList>
    </citation>
    <scope>NUCLEOTIDE SEQUENCE [LARGE SCALE GENOMIC DNA]</scope>
    <source>
        <strain>DSM 271 / SK 413</strain>
    </source>
</reference>
<name>PPK1_PROA2</name>
<gene>
    <name evidence="1" type="primary">ppk</name>
    <name type="ordered locus">Paes_1041</name>
</gene>
<proteinExistence type="inferred from homology"/>
<evidence type="ECO:0000255" key="1">
    <source>
        <dbReference type="HAMAP-Rule" id="MF_00347"/>
    </source>
</evidence>
<accession>B4S7P3</accession>
<feature type="chain" id="PRO_1000120505" description="Polyphosphate kinase">
    <location>
        <begin position="1"/>
        <end position="713"/>
    </location>
</feature>
<feature type="active site" description="Phosphohistidine intermediate" evidence="1">
    <location>
        <position position="454"/>
    </location>
</feature>
<feature type="binding site" evidence="1">
    <location>
        <position position="63"/>
    </location>
    <ligand>
        <name>ATP</name>
        <dbReference type="ChEBI" id="CHEBI:30616"/>
    </ligand>
</feature>
<feature type="binding site" evidence="1">
    <location>
        <position position="394"/>
    </location>
    <ligand>
        <name>Mg(2+)</name>
        <dbReference type="ChEBI" id="CHEBI:18420"/>
    </ligand>
</feature>
<feature type="binding site" evidence="1">
    <location>
        <position position="424"/>
    </location>
    <ligand>
        <name>Mg(2+)</name>
        <dbReference type="ChEBI" id="CHEBI:18420"/>
    </ligand>
</feature>
<feature type="binding site" evidence="1">
    <location>
        <position position="487"/>
    </location>
    <ligand>
        <name>ATP</name>
        <dbReference type="ChEBI" id="CHEBI:30616"/>
    </ligand>
</feature>
<feature type="binding site" evidence="1">
    <location>
        <position position="583"/>
    </location>
    <ligand>
        <name>ATP</name>
        <dbReference type="ChEBI" id="CHEBI:30616"/>
    </ligand>
</feature>
<feature type="binding site" evidence="1">
    <location>
        <position position="611"/>
    </location>
    <ligand>
        <name>ATP</name>
        <dbReference type="ChEBI" id="CHEBI:30616"/>
    </ligand>
</feature>
<organism>
    <name type="scientific">Prosthecochloris aestuarii (strain DSM 271 / SK 413)</name>
    <dbReference type="NCBI Taxonomy" id="290512"/>
    <lineage>
        <taxon>Bacteria</taxon>
        <taxon>Pseudomonadati</taxon>
        <taxon>Chlorobiota</taxon>
        <taxon>Chlorobiia</taxon>
        <taxon>Chlorobiales</taxon>
        <taxon>Chlorobiaceae</taxon>
        <taxon>Prosthecochloris</taxon>
    </lineage>
</organism>
<comment type="function">
    <text evidence="1">Catalyzes the reversible transfer of the terminal phosphate of ATP to form a long-chain polyphosphate (polyP).</text>
</comment>
<comment type="catalytic activity">
    <reaction evidence="1">
        <text>[phosphate](n) + ATP = [phosphate](n+1) + ADP</text>
        <dbReference type="Rhea" id="RHEA:19573"/>
        <dbReference type="Rhea" id="RHEA-COMP:9859"/>
        <dbReference type="Rhea" id="RHEA-COMP:14280"/>
        <dbReference type="ChEBI" id="CHEBI:16838"/>
        <dbReference type="ChEBI" id="CHEBI:30616"/>
        <dbReference type="ChEBI" id="CHEBI:456216"/>
        <dbReference type="EC" id="2.7.4.1"/>
    </reaction>
</comment>
<comment type="cofactor">
    <cofactor evidence="1">
        <name>Mg(2+)</name>
        <dbReference type="ChEBI" id="CHEBI:18420"/>
    </cofactor>
</comment>
<comment type="PTM">
    <text evidence="1">An intermediate of this reaction is the autophosphorylated ppk in which a phosphate is covalently linked to a histidine residue through a N-P bond.</text>
</comment>
<comment type="similarity">
    <text evidence="1">Belongs to the polyphosphate kinase 1 (PPK1) family.</text>
</comment>
<dbReference type="EC" id="2.7.4.1" evidence="1"/>
<dbReference type="EMBL" id="CP001108">
    <property type="protein sequence ID" value="ACF46080.1"/>
    <property type="molecule type" value="Genomic_DNA"/>
</dbReference>
<dbReference type="RefSeq" id="WP_012505617.1">
    <property type="nucleotide sequence ID" value="NC_011059.1"/>
</dbReference>
<dbReference type="SMR" id="B4S7P3"/>
<dbReference type="STRING" id="290512.Paes_1041"/>
<dbReference type="KEGG" id="paa:Paes_1041"/>
<dbReference type="eggNOG" id="COG0855">
    <property type="taxonomic scope" value="Bacteria"/>
</dbReference>
<dbReference type="HOGENOM" id="CLU_009678_5_0_10"/>
<dbReference type="Proteomes" id="UP000002725">
    <property type="component" value="Chromosome"/>
</dbReference>
<dbReference type="GO" id="GO:0009358">
    <property type="term" value="C:polyphosphate kinase complex"/>
    <property type="evidence" value="ECO:0007669"/>
    <property type="project" value="InterPro"/>
</dbReference>
<dbReference type="GO" id="GO:0005524">
    <property type="term" value="F:ATP binding"/>
    <property type="evidence" value="ECO:0007669"/>
    <property type="project" value="UniProtKB-KW"/>
</dbReference>
<dbReference type="GO" id="GO:0046872">
    <property type="term" value="F:metal ion binding"/>
    <property type="evidence" value="ECO:0007669"/>
    <property type="project" value="UniProtKB-KW"/>
</dbReference>
<dbReference type="GO" id="GO:0008976">
    <property type="term" value="F:polyphosphate kinase activity"/>
    <property type="evidence" value="ECO:0007669"/>
    <property type="project" value="UniProtKB-UniRule"/>
</dbReference>
<dbReference type="GO" id="GO:0006799">
    <property type="term" value="P:polyphosphate biosynthetic process"/>
    <property type="evidence" value="ECO:0007669"/>
    <property type="project" value="UniProtKB-UniRule"/>
</dbReference>
<dbReference type="CDD" id="cd09165">
    <property type="entry name" value="PLDc_PaPPK1_C1_like"/>
    <property type="match status" value="1"/>
</dbReference>
<dbReference type="CDD" id="cd09168">
    <property type="entry name" value="PLDc_PaPPK1_C2_like"/>
    <property type="match status" value="1"/>
</dbReference>
<dbReference type="FunFam" id="3.30.870.10:FF:000001">
    <property type="entry name" value="Polyphosphate kinase"/>
    <property type="match status" value="1"/>
</dbReference>
<dbReference type="Gene3D" id="3.30.870.10">
    <property type="entry name" value="Endonuclease Chain A"/>
    <property type="match status" value="2"/>
</dbReference>
<dbReference type="Gene3D" id="3.30.1840.10">
    <property type="entry name" value="Polyphosphate kinase middle domain"/>
    <property type="match status" value="1"/>
</dbReference>
<dbReference type="Gene3D" id="1.20.58.310">
    <property type="entry name" value="Polyphosphate kinase N-terminal domain"/>
    <property type="match status" value="1"/>
</dbReference>
<dbReference type="HAMAP" id="MF_00347">
    <property type="entry name" value="Polyphosphate_kinase"/>
    <property type="match status" value="1"/>
</dbReference>
<dbReference type="InterPro" id="IPR003414">
    <property type="entry name" value="PP_kinase"/>
</dbReference>
<dbReference type="InterPro" id="IPR041108">
    <property type="entry name" value="PP_kinase_C_1"/>
</dbReference>
<dbReference type="InterPro" id="IPR024953">
    <property type="entry name" value="PP_kinase_middle"/>
</dbReference>
<dbReference type="InterPro" id="IPR036830">
    <property type="entry name" value="PP_kinase_middle_dom_sf"/>
</dbReference>
<dbReference type="InterPro" id="IPR025200">
    <property type="entry name" value="PPK_C_dom2"/>
</dbReference>
<dbReference type="InterPro" id="IPR025198">
    <property type="entry name" value="PPK_N_dom"/>
</dbReference>
<dbReference type="InterPro" id="IPR036832">
    <property type="entry name" value="PPK_N_dom_sf"/>
</dbReference>
<dbReference type="NCBIfam" id="TIGR03705">
    <property type="entry name" value="poly_P_kin"/>
    <property type="match status" value="1"/>
</dbReference>
<dbReference type="NCBIfam" id="NF003917">
    <property type="entry name" value="PRK05443.1-1"/>
    <property type="match status" value="1"/>
</dbReference>
<dbReference type="NCBIfam" id="NF003918">
    <property type="entry name" value="PRK05443.1-2"/>
    <property type="match status" value="1"/>
</dbReference>
<dbReference type="NCBIfam" id="NF003921">
    <property type="entry name" value="PRK05443.2-2"/>
    <property type="match status" value="1"/>
</dbReference>
<dbReference type="PANTHER" id="PTHR30218">
    <property type="entry name" value="POLYPHOSPHATE KINASE"/>
    <property type="match status" value="1"/>
</dbReference>
<dbReference type="PANTHER" id="PTHR30218:SF0">
    <property type="entry name" value="POLYPHOSPHATE KINASE"/>
    <property type="match status" value="1"/>
</dbReference>
<dbReference type="Pfam" id="PF02503">
    <property type="entry name" value="PP_kinase"/>
    <property type="match status" value="1"/>
</dbReference>
<dbReference type="Pfam" id="PF13090">
    <property type="entry name" value="PP_kinase_C"/>
    <property type="match status" value="1"/>
</dbReference>
<dbReference type="Pfam" id="PF17941">
    <property type="entry name" value="PP_kinase_C_1"/>
    <property type="match status" value="1"/>
</dbReference>
<dbReference type="Pfam" id="PF13089">
    <property type="entry name" value="PP_kinase_N"/>
    <property type="match status" value="1"/>
</dbReference>
<dbReference type="PIRSF" id="PIRSF015589">
    <property type="entry name" value="PP_kinase"/>
    <property type="match status" value="1"/>
</dbReference>
<dbReference type="SUPFAM" id="SSF56024">
    <property type="entry name" value="Phospholipase D/nuclease"/>
    <property type="match status" value="2"/>
</dbReference>
<dbReference type="SUPFAM" id="SSF143724">
    <property type="entry name" value="PHP14-like"/>
    <property type="match status" value="1"/>
</dbReference>
<dbReference type="SUPFAM" id="SSF140356">
    <property type="entry name" value="PPK N-terminal domain-like"/>
    <property type="match status" value="1"/>
</dbReference>
<protein>
    <recommendedName>
        <fullName evidence="1">Polyphosphate kinase</fullName>
        <ecNumber evidence="1">2.7.4.1</ecNumber>
    </recommendedName>
    <alternativeName>
        <fullName evidence="1">ATP-polyphosphate phosphotransferase</fullName>
    </alternativeName>
    <alternativeName>
        <fullName evidence="1">Polyphosphoric acid kinase</fullName>
    </alternativeName>
</protein>
<sequence>MMDNSTESVEDAVSLPDFDNPSFYVNRELSWMAFNQRVLEEALSRDEHPLLERIKFISIFSSNLDEFFMIRVAGLEDQYEAGVQDRSIDGMTPAEQLEKIREGVTAQFIQRDACFYGDICPELARHGIEFVDYRSFSESNKEVLQQYFRHEIFPVLTPLAFDTGHPFPFVSNLSLNLAIELEDLEHQSMKFARVKVPSILPRILRLDLIDGLDFGDDRIRLLWLDDFISHHLEQLFPLMRIVQAYPFRVIRDADIEIEEDEAGDLLETIEQGIRSRRYGKVVRLDVTPDMPESIRLLLIKHLEVSSRNVYEIPGALGLSSLMELMRIDKPELKDEPFAPSNPIEEKAGGDIFSAIRQSDHLFYHPYDSFQPVVDLINQAARDPQVLSIKQTLYRVGSNSPIVQALMHAVEEGKQVAVLVELKARFDEENNIVWARALENVGAHVVYGLVGLKTHAKLTMIVRREHDKLKRYLHLGTGNYNPATAKIYTDYSFLTANEILSEDVSELFNALTGYSRHTAYRKLIVSPLNTRKRIIAMIEREIEWHKKEGNGRIVMKMNALVDRKTIKALYLASAAGVQVDLIVRGICCLVPGIEGVSHNIRVISVIGRFLEHSRAYYFRNGGMDELFLGSADIMPRNLDHRVEVLFPVLDSELINVVKSELELILSDNVKAWQMNADGTYSKVVDQRPAVNSQSVFLQQASMKKSISKFKVNGL</sequence>
<keyword id="KW-0067">ATP-binding</keyword>
<keyword id="KW-0418">Kinase</keyword>
<keyword id="KW-0460">Magnesium</keyword>
<keyword id="KW-0479">Metal-binding</keyword>
<keyword id="KW-0547">Nucleotide-binding</keyword>
<keyword id="KW-0597">Phosphoprotein</keyword>
<keyword id="KW-0808">Transferase</keyword>